<sequence length="146" mass="16404">MNSLSIFFIVVATAAVCLLFIQSYSIYENYGNIKEFNATHAAFEYSKSIGGTPALDRRVQDVNDTISDVKQKWRCVVYPGNGFVSASIFGFQAEVGPNNTRSIRKFNTMRQCIDFTFSDVINIDIYNPCIAPNINNTECQFLKSVL</sequence>
<organismHost>
    <name type="scientific">Cynomys gunnisoni</name>
    <name type="common">Gunnison's prairie dog</name>
    <name type="synonym">Spermophilus gunnisoni</name>
    <dbReference type="NCBI Taxonomy" id="45479"/>
</organismHost>
<organismHost>
    <name type="scientific">Cynomys leucurus</name>
    <name type="common">White-tailed prairie dog</name>
    <dbReference type="NCBI Taxonomy" id="99825"/>
</organismHost>
<organismHost>
    <name type="scientific">Cynomys ludovicianus</name>
    <name type="common">Black-tailed prairie dog</name>
    <dbReference type="NCBI Taxonomy" id="45480"/>
</organismHost>
<organismHost>
    <name type="scientific">Cynomys mexicanus</name>
    <name type="common">Mexican prairie dog</name>
    <dbReference type="NCBI Taxonomy" id="99826"/>
</organismHost>
<organismHost>
    <name type="scientific">Cynomys parvidens</name>
    <name type="common">Utah prairie dog</name>
    <dbReference type="NCBI Taxonomy" id="99827"/>
</organismHost>
<organismHost>
    <name type="scientific">Gliridae</name>
    <name type="common">dormice</name>
    <dbReference type="NCBI Taxonomy" id="30650"/>
</organismHost>
<organismHost>
    <name type="scientific">Heliosciurus ruwenzorii</name>
    <name type="common">Ruwenzori sun squirrel</name>
    <dbReference type="NCBI Taxonomy" id="226685"/>
</organismHost>
<organismHost>
    <name type="scientific">Homo sapiens</name>
    <name type="common">Human</name>
    <dbReference type="NCBI Taxonomy" id="9606"/>
</organismHost>
<organismHost>
    <name type="scientific">Mus musculus</name>
    <name type="common">Mouse</name>
    <dbReference type="NCBI Taxonomy" id="10090"/>
</organismHost>
<protein>
    <recommendedName>
        <fullName>Envelope protein OPG155</fullName>
    </recommendedName>
</protein>
<reference key="1">
    <citation type="journal article" date="2022" name="J. Infect. Dis.">
        <title>Exportation of Monkeypox virus from the African continent.</title>
        <authorList>
            <person name="Mauldin M.R."/>
            <person name="McCollum A.M."/>
            <person name="Nakazawa Y.J."/>
            <person name="Mandra A."/>
            <person name="Whitehouse E.R."/>
            <person name="Davidson W."/>
            <person name="Zhao H."/>
            <person name="Gao J."/>
            <person name="Li Y."/>
            <person name="Doty J."/>
            <person name="Yinka-Ogunleye A."/>
            <person name="Akinpelu A."/>
            <person name="Aruna O."/>
            <person name="Naidoo D."/>
            <person name="Lewandowski K."/>
            <person name="Afrough B."/>
            <person name="Graham V."/>
            <person name="Aarons E."/>
            <person name="Hewson R."/>
            <person name="Vipond R."/>
            <person name="Dunning J."/>
            <person name="Chand M."/>
            <person name="Brown C."/>
            <person name="Cohen-Gihon I."/>
            <person name="Erez N."/>
            <person name="Shifman O."/>
            <person name="Israeli O."/>
            <person name="Sharon M."/>
            <person name="Schwartz E."/>
            <person name="Beth-Din A."/>
            <person name="Zvi A."/>
            <person name="Mak T.M."/>
            <person name="Ng Y.K."/>
            <person name="Cui L."/>
            <person name="Lin R.T.P."/>
            <person name="Olson V.A."/>
            <person name="Brooks T."/>
            <person name="Paran N."/>
            <person name="Ihekweazu C."/>
            <person name="Reynolds M.G."/>
        </authorList>
    </citation>
    <scope>NUCLEOTIDE SEQUENCE [LARGE SCALE GENOMIC DNA]</scope>
    <source>
        <strain>MPXV-M5312_HM12_Rivers</strain>
    </source>
</reference>
<feature type="chain" id="PRO_0000457540" description="Envelope protein OPG155">
    <location>
        <begin position="1"/>
        <end position="146"/>
    </location>
</feature>
<feature type="transmembrane region" description="Helical; Signal-anchor for type III membrane protein" evidence="2">
    <location>
        <begin position="1"/>
        <end position="21"/>
    </location>
</feature>
<feature type="topological domain" description="Virion surface" evidence="2">
    <location>
        <begin position="22"/>
        <end position="146"/>
    </location>
</feature>
<organism>
    <name type="scientific">Monkeypox virus</name>
    <dbReference type="NCBI Taxonomy" id="10244"/>
    <lineage>
        <taxon>Viruses</taxon>
        <taxon>Varidnaviria</taxon>
        <taxon>Bamfordvirae</taxon>
        <taxon>Nucleocytoviricota</taxon>
        <taxon>Pokkesviricetes</taxon>
        <taxon>Chitovirales</taxon>
        <taxon>Poxviridae</taxon>
        <taxon>Chordopoxvirinae</taxon>
        <taxon>Orthopoxvirus</taxon>
    </lineage>
</organism>
<comment type="function">
    <text evidence="1">Envelope protein required for virus entry into host cell and for cell-cell fusion (syncytium formation).</text>
</comment>
<comment type="subunit">
    <text evidence="1">Part of a stable entry-fusion complex (EFC) which is at least composed of proteins OPG143, OPG147, OPG155, OPG086, OPG094, OPG107, OPG104, and OPG099. Formation of the viral membrane is necessary for the assembly of the complex. Interacts directly with protein OPG107.</text>
</comment>
<comment type="subcellular location">
    <subcellularLocation>
        <location evidence="1">Virion membrane</location>
        <topology evidence="1">Single-pass type III membrane protein</topology>
    </subcellularLocation>
    <text evidence="1">Component of the mature virion (MV) membrane.</text>
</comment>
<comment type="PTM">
    <text evidence="1">Contains two intramolecular disulfide bonds. They are created by the viral disulfide bond formation pathway, a poxvirus-specific pathway that operates on the cytoplasmic side of the MV membranes.</text>
</comment>
<comment type="similarity">
    <text evidence="3">Belongs to the orthopoxvirus OPG155 protein family.</text>
</comment>
<name>PG155_MONPV</name>
<dbReference type="EMBL" id="MT903340">
    <property type="protein sequence ID" value="QNP13009.1"/>
    <property type="molecule type" value="Genomic_DNA"/>
</dbReference>
<dbReference type="RefSeq" id="NP_536567.1">
    <property type="nucleotide sequence ID" value="NC_003310.1"/>
</dbReference>
<dbReference type="RefSeq" id="YP_010377136.1">
    <property type="nucleotide sequence ID" value="NC_063383.1"/>
</dbReference>
<dbReference type="SMR" id="A0A7H0DNC6"/>
<dbReference type="GeneID" id="72551549"/>
<dbReference type="GeneID" id="928965"/>
<dbReference type="KEGG" id="vg:928965"/>
<dbReference type="Proteomes" id="UP000516359">
    <property type="component" value="Genome"/>
</dbReference>
<dbReference type="GO" id="GO:0016020">
    <property type="term" value="C:membrane"/>
    <property type="evidence" value="ECO:0007669"/>
    <property type="project" value="UniProtKB-KW"/>
</dbReference>
<dbReference type="GO" id="GO:0019031">
    <property type="term" value="C:viral envelope"/>
    <property type="evidence" value="ECO:0007669"/>
    <property type="project" value="InterPro"/>
</dbReference>
<dbReference type="GO" id="GO:0055036">
    <property type="term" value="C:virion membrane"/>
    <property type="evidence" value="ECO:0007669"/>
    <property type="project" value="UniProtKB-SubCell"/>
</dbReference>
<dbReference type="GO" id="GO:0039663">
    <property type="term" value="P:membrane fusion involved in viral entry into host cell"/>
    <property type="evidence" value="ECO:0007669"/>
    <property type="project" value="UniProtKB-KW"/>
</dbReference>
<dbReference type="GO" id="GO:0046718">
    <property type="term" value="P:symbiont entry into host cell"/>
    <property type="evidence" value="ECO:0007669"/>
    <property type="project" value="UniProtKB-KW"/>
</dbReference>
<dbReference type="InterPro" id="IPR007664">
    <property type="entry name" value="Poxvirus_A28"/>
</dbReference>
<dbReference type="Pfam" id="PF04584">
    <property type="entry name" value="Pox_A28"/>
    <property type="match status" value="1"/>
</dbReference>
<proteinExistence type="inferred from homology"/>
<accession>A0A7H0DNC6</accession>
<evidence type="ECO:0000250" key="1">
    <source>
        <dbReference type="UniProtKB" id="P68633"/>
    </source>
</evidence>
<evidence type="ECO:0000255" key="2"/>
<evidence type="ECO:0000305" key="3"/>
<gene>
    <name type="primary">OPG155</name>
    <name type="ORF">MPXVgp140</name>
</gene>
<keyword id="KW-1015">Disulfide bond</keyword>
<keyword id="KW-1168">Fusion of virus membrane with host membrane</keyword>
<keyword id="KW-0426">Late protein</keyword>
<keyword id="KW-0472">Membrane</keyword>
<keyword id="KW-0597">Phosphoprotein</keyword>
<keyword id="KW-1185">Reference proteome</keyword>
<keyword id="KW-0812">Transmembrane</keyword>
<keyword id="KW-1133">Transmembrane helix</keyword>
<keyword id="KW-1162">Viral penetration into host cytoplasm</keyword>
<keyword id="KW-0946">Virion</keyword>
<keyword id="KW-1160">Virus entry into host cell</keyword>